<proteinExistence type="inferred from homology"/>
<comment type="function">
    <text evidence="1">Involved in the binding of tRNA to the ribosomes.</text>
</comment>
<comment type="subunit">
    <text evidence="1">Part of the 30S ribosomal subunit.</text>
</comment>
<comment type="similarity">
    <text evidence="1">Belongs to the universal ribosomal protein uS10 family.</text>
</comment>
<keyword id="KW-0687">Ribonucleoprotein</keyword>
<keyword id="KW-0689">Ribosomal protein</keyword>
<gene>
    <name evidence="1" type="primary">rpsJ</name>
    <name type="ordered locus">Pput_0486</name>
</gene>
<protein>
    <recommendedName>
        <fullName evidence="1">Small ribosomal subunit protein uS10</fullName>
    </recommendedName>
    <alternativeName>
        <fullName evidence="2">30S ribosomal protein S10</fullName>
    </alternativeName>
</protein>
<dbReference type="EMBL" id="CP000712">
    <property type="protein sequence ID" value="ABQ76656.1"/>
    <property type="molecule type" value="Genomic_DNA"/>
</dbReference>
<dbReference type="SMR" id="A5VXP6"/>
<dbReference type="KEGG" id="ppf:Pput_0486"/>
<dbReference type="eggNOG" id="COG0051">
    <property type="taxonomic scope" value="Bacteria"/>
</dbReference>
<dbReference type="HOGENOM" id="CLU_122625_1_3_6"/>
<dbReference type="GO" id="GO:1990904">
    <property type="term" value="C:ribonucleoprotein complex"/>
    <property type="evidence" value="ECO:0007669"/>
    <property type="project" value="UniProtKB-KW"/>
</dbReference>
<dbReference type="GO" id="GO:0005840">
    <property type="term" value="C:ribosome"/>
    <property type="evidence" value="ECO:0007669"/>
    <property type="project" value="UniProtKB-KW"/>
</dbReference>
<dbReference type="GO" id="GO:0003735">
    <property type="term" value="F:structural constituent of ribosome"/>
    <property type="evidence" value="ECO:0007669"/>
    <property type="project" value="InterPro"/>
</dbReference>
<dbReference type="GO" id="GO:0000049">
    <property type="term" value="F:tRNA binding"/>
    <property type="evidence" value="ECO:0007669"/>
    <property type="project" value="UniProtKB-UniRule"/>
</dbReference>
<dbReference type="GO" id="GO:0006412">
    <property type="term" value="P:translation"/>
    <property type="evidence" value="ECO:0007669"/>
    <property type="project" value="UniProtKB-UniRule"/>
</dbReference>
<dbReference type="FunFam" id="3.30.70.600:FF:000001">
    <property type="entry name" value="30S ribosomal protein S10"/>
    <property type="match status" value="1"/>
</dbReference>
<dbReference type="Gene3D" id="3.30.70.600">
    <property type="entry name" value="Ribosomal protein S10 domain"/>
    <property type="match status" value="1"/>
</dbReference>
<dbReference type="HAMAP" id="MF_00508">
    <property type="entry name" value="Ribosomal_uS10"/>
    <property type="match status" value="1"/>
</dbReference>
<dbReference type="InterPro" id="IPR001848">
    <property type="entry name" value="Ribosomal_uS10"/>
</dbReference>
<dbReference type="InterPro" id="IPR018268">
    <property type="entry name" value="Ribosomal_uS10_CS"/>
</dbReference>
<dbReference type="InterPro" id="IPR027486">
    <property type="entry name" value="Ribosomal_uS10_dom"/>
</dbReference>
<dbReference type="InterPro" id="IPR036838">
    <property type="entry name" value="Ribosomal_uS10_dom_sf"/>
</dbReference>
<dbReference type="NCBIfam" id="NF001861">
    <property type="entry name" value="PRK00596.1"/>
    <property type="match status" value="1"/>
</dbReference>
<dbReference type="NCBIfam" id="TIGR01049">
    <property type="entry name" value="rpsJ_bact"/>
    <property type="match status" value="1"/>
</dbReference>
<dbReference type="PANTHER" id="PTHR11700">
    <property type="entry name" value="30S RIBOSOMAL PROTEIN S10 FAMILY MEMBER"/>
    <property type="match status" value="1"/>
</dbReference>
<dbReference type="Pfam" id="PF00338">
    <property type="entry name" value="Ribosomal_S10"/>
    <property type="match status" value="1"/>
</dbReference>
<dbReference type="PRINTS" id="PR00971">
    <property type="entry name" value="RIBOSOMALS10"/>
</dbReference>
<dbReference type="SMART" id="SM01403">
    <property type="entry name" value="Ribosomal_S10"/>
    <property type="match status" value="1"/>
</dbReference>
<dbReference type="SUPFAM" id="SSF54999">
    <property type="entry name" value="Ribosomal protein S10"/>
    <property type="match status" value="1"/>
</dbReference>
<dbReference type="PROSITE" id="PS00361">
    <property type="entry name" value="RIBOSOMAL_S10"/>
    <property type="match status" value="1"/>
</dbReference>
<accession>A5VXP6</accession>
<sequence length="103" mass="11753">MQNQQIRIRLKAFDHRLIDQSTQEIVETAKRTGAQVRGPIPLPTRKERFTVLVSPHVNKDARDQYEIRTHKRVLDIVQPTDKTVDALMKLDLAAGVEVQISLG</sequence>
<reference key="1">
    <citation type="submission" date="2007-05" db="EMBL/GenBank/DDBJ databases">
        <title>Complete sequence of Pseudomonas putida F1.</title>
        <authorList>
            <consortium name="US DOE Joint Genome Institute"/>
            <person name="Copeland A."/>
            <person name="Lucas S."/>
            <person name="Lapidus A."/>
            <person name="Barry K."/>
            <person name="Detter J.C."/>
            <person name="Glavina del Rio T."/>
            <person name="Hammon N."/>
            <person name="Israni S."/>
            <person name="Dalin E."/>
            <person name="Tice H."/>
            <person name="Pitluck S."/>
            <person name="Chain P."/>
            <person name="Malfatti S."/>
            <person name="Shin M."/>
            <person name="Vergez L."/>
            <person name="Schmutz J."/>
            <person name="Larimer F."/>
            <person name="Land M."/>
            <person name="Hauser L."/>
            <person name="Kyrpides N."/>
            <person name="Lykidis A."/>
            <person name="Parales R."/>
            <person name="Richardson P."/>
        </authorList>
    </citation>
    <scope>NUCLEOTIDE SEQUENCE [LARGE SCALE GENOMIC DNA]</scope>
    <source>
        <strain>ATCC 700007 / DSM 6899 / JCM 31910 / BCRC 17059 / LMG 24140 / F1</strain>
    </source>
</reference>
<feature type="chain" id="PRO_1000015088" description="Small ribosomal subunit protein uS10">
    <location>
        <begin position="1"/>
        <end position="103"/>
    </location>
</feature>
<evidence type="ECO:0000255" key="1">
    <source>
        <dbReference type="HAMAP-Rule" id="MF_00508"/>
    </source>
</evidence>
<evidence type="ECO:0000305" key="2"/>
<organism>
    <name type="scientific">Pseudomonas putida (strain ATCC 700007 / DSM 6899 / JCM 31910 / BCRC 17059 / LMG 24140 / F1)</name>
    <dbReference type="NCBI Taxonomy" id="351746"/>
    <lineage>
        <taxon>Bacteria</taxon>
        <taxon>Pseudomonadati</taxon>
        <taxon>Pseudomonadota</taxon>
        <taxon>Gammaproteobacteria</taxon>
        <taxon>Pseudomonadales</taxon>
        <taxon>Pseudomonadaceae</taxon>
        <taxon>Pseudomonas</taxon>
    </lineage>
</organism>
<name>RS10_PSEP1</name>